<protein>
    <recommendedName>
        <fullName>Protein psiL</fullName>
    </recommendedName>
</protein>
<comment type="subcellular location">
    <subcellularLocation>
        <location evidence="3">Membrane</location>
        <topology evidence="3">Single-pass type I membrane protein</topology>
    </subcellularLocation>
</comment>
<comment type="similarity">
    <text evidence="3">Belongs to the prespore-cell-inducing factor family.</text>
</comment>
<name>PSIL_DICDI</name>
<gene>
    <name type="primary">psiL</name>
    <name type="ORF">DDB_G0274441</name>
</gene>
<proteinExistence type="inferred from homology"/>
<accession>Q86HT1</accession>
<accession>Q554Y3</accession>
<evidence type="ECO:0000255" key="1"/>
<evidence type="ECO:0000255" key="2">
    <source>
        <dbReference type="PROSITE-ProRule" id="PRU01164"/>
    </source>
</evidence>
<evidence type="ECO:0000305" key="3"/>
<keyword id="KW-0325">Glycoprotein</keyword>
<keyword id="KW-0472">Membrane</keyword>
<keyword id="KW-1185">Reference proteome</keyword>
<keyword id="KW-0732">Signal</keyword>
<keyword id="KW-0812">Transmembrane</keyword>
<keyword id="KW-1133">Transmembrane helix</keyword>
<organism>
    <name type="scientific">Dictyostelium discoideum</name>
    <name type="common">Social amoeba</name>
    <dbReference type="NCBI Taxonomy" id="44689"/>
    <lineage>
        <taxon>Eukaryota</taxon>
        <taxon>Amoebozoa</taxon>
        <taxon>Evosea</taxon>
        <taxon>Eumycetozoa</taxon>
        <taxon>Dictyostelia</taxon>
        <taxon>Dictyosteliales</taxon>
        <taxon>Dictyosteliaceae</taxon>
        <taxon>Dictyostelium</taxon>
    </lineage>
</organism>
<dbReference type="EMBL" id="AAFI02000012">
    <property type="protein sequence ID" value="EAL70113.1"/>
    <property type="molecule type" value="Genomic_DNA"/>
</dbReference>
<dbReference type="RefSeq" id="XP_644190.1">
    <property type="nucleotide sequence ID" value="XM_639098.1"/>
</dbReference>
<dbReference type="FunCoup" id="Q86HT1">
    <property type="interactions" value="20"/>
</dbReference>
<dbReference type="GlyCosmos" id="Q86HT1">
    <property type="glycosylation" value="6 sites, No reported glycans"/>
</dbReference>
<dbReference type="GlyGen" id="Q86HT1">
    <property type="glycosylation" value="6 sites"/>
</dbReference>
<dbReference type="PaxDb" id="44689-DDB0232400"/>
<dbReference type="EnsemblProtists" id="EAL70113">
    <property type="protein sequence ID" value="EAL70113"/>
    <property type="gene ID" value="DDB_G0274441"/>
</dbReference>
<dbReference type="GeneID" id="8619619"/>
<dbReference type="KEGG" id="ddi:DDB_G0274441"/>
<dbReference type="dictyBase" id="DDB_G0274441">
    <property type="gene designation" value="psiL"/>
</dbReference>
<dbReference type="VEuPathDB" id="AmoebaDB:DDB_G0274441"/>
<dbReference type="eggNOG" id="ENOG502REBK">
    <property type="taxonomic scope" value="Eukaryota"/>
</dbReference>
<dbReference type="HOGENOM" id="CLU_024170_0_0_1"/>
<dbReference type="InParanoid" id="Q86HT1"/>
<dbReference type="OMA" id="CERHTDG"/>
<dbReference type="PhylomeDB" id="Q86HT1"/>
<dbReference type="PRO" id="PR:Q86HT1"/>
<dbReference type="Proteomes" id="UP000002195">
    <property type="component" value="Chromosome 2"/>
</dbReference>
<dbReference type="GO" id="GO:0005576">
    <property type="term" value="C:extracellular region"/>
    <property type="evidence" value="ECO:0000318"/>
    <property type="project" value="GO_Central"/>
</dbReference>
<dbReference type="GO" id="GO:0016020">
    <property type="term" value="C:membrane"/>
    <property type="evidence" value="ECO:0007669"/>
    <property type="project" value="UniProtKB-SubCell"/>
</dbReference>
<dbReference type="InterPro" id="IPR011874">
    <property type="entry name" value="Fibro_Slime"/>
</dbReference>
<dbReference type="InterPro" id="IPR037524">
    <property type="entry name" value="PA14/GLEYA"/>
</dbReference>
<dbReference type="InterPro" id="IPR011658">
    <property type="entry name" value="PA14_dom"/>
</dbReference>
<dbReference type="InterPro" id="IPR051154">
    <property type="entry name" value="Prespore-cell_inducing_factor"/>
</dbReference>
<dbReference type="NCBIfam" id="TIGR02148">
    <property type="entry name" value="Fibro_Slime"/>
    <property type="match status" value="1"/>
</dbReference>
<dbReference type="PANTHER" id="PTHR31137">
    <property type="entry name" value="PROTEIN PSIB-RELATED-RELATED"/>
    <property type="match status" value="1"/>
</dbReference>
<dbReference type="PANTHER" id="PTHR31137:SF33">
    <property type="entry name" value="PROTEIN PSIL"/>
    <property type="match status" value="1"/>
</dbReference>
<dbReference type="Pfam" id="PF07691">
    <property type="entry name" value="PA14"/>
    <property type="match status" value="1"/>
</dbReference>
<dbReference type="SMART" id="SM00758">
    <property type="entry name" value="PA14"/>
    <property type="match status" value="1"/>
</dbReference>
<dbReference type="PROSITE" id="PS51820">
    <property type="entry name" value="PA14"/>
    <property type="match status" value="1"/>
</dbReference>
<reference key="1">
    <citation type="journal article" date="2002" name="Nature">
        <title>Sequence and analysis of chromosome 2 of Dictyostelium discoideum.</title>
        <authorList>
            <person name="Gloeckner G."/>
            <person name="Eichinger L."/>
            <person name="Szafranski K."/>
            <person name="Pachebat J.A."/>
            <person name="Bankier A.T."/>
            <person name="Dear P.H."/>
            <person name="Lehmann R."/>
            <person name="Baumgart C."/>
            <person name="Parra G."/>
            <person name="Abril J.F."/>
            <person name="Guigo R."/>
            <person name="Kumpf K."/>
            <person name="Tunggal B."/>
            <person name="Cox E.C."/>
            <person name="Quail M.A."/>
            <person name="Platzer M."/>
            <person name="Rosenthal A."/>
            <person name="Noegel A.A."/>
        </authorList>
    </citation>
    <scope>NUCLEOTIDE SEQUENCE [LARGE SCALE GENOMIC DNA]</scope>
    <source>
        <strain>AX4</strain>
    </source>
</reference>
<reference key="2">
    <citation type="journal article" date="2005" name="Nature">
        <title>The genome of the social amoeba Dictyostelium discoideum.</title>
        <authorList>
            <person name="Eichinger L."/>
            <person name="Pachebat J.A."/>
            <person name="Gloeckner G."/>
            <person name="Rajandream M.A."/>
            <person name="Sucgang R."/>
            <person name="Berriman M."/>
            <person name="Song J."/>
            <person name="Olsen R."/>
            <person name="Szafranski K."/>
            <person name="Xu Q."/>
            <person name="Tunggal B."/>
            <person name="Kummerfeld S."/>
            <person name="Madera M."/>
            <person name="Konfortov B.A."/>
            <person name="Rivero F."/>
            <person name="Bankier A.T."/>
            <person name="Lehmann R."/>
            <person name="Hamlin N."/>
            <person name="Davies R."/>
            <person name="Gaudet P."/>
            <person name="Fey P."/>
            <person name="Pilcher K."/>
            <person name="Chen G."/>
            <person name="Saunders D."/>
            <person name="Sodergren E.J."/>
            <person name="Davis P."/>
            <person name="Kerhornou A."/>
            <person name="Nie X."/>
            <person name="Hall N."/>
            <person name="Anjard C."/>
            <person name="Hemphill L."/>
            <person name="Bason N."/>
            <person name="Farbrother P."/>
            <person name="Desany B."/>
            <person name="Just E."/>
            <person name="Morio T."/>
            <person name="Rost R."/>
            <person name="Churcher C.M."/>
            <person name="Cooper J."/>
            <person name="Haydock S."/>
            <person name="van Driessche N."/>
            <person name="Cronin A."/>
            <person name="Goodhead I."/>
            <person name="Muzny D.M."/>
            <person name="Mourier T."/>
            <person name="Pain A."/>
            <person name="Lu M."/>
            <person name="Harper D."/>
            <person name="Lindsay R."/>
            <person name="Hauser H."/>
            <person name="James K.D."/>
            <person name="Quiles M."/>
            <person name="Madan Babu M."/>
            <person name="Saito T."/>
            <person name="Buchrieser C."/>
            <person name="Wardroper A."/>
            <person name="Felder M."/>
            <person name="Thangavelu M."/>
            <person name="Johnson D."/>
            <person name="Knights A."/>
            <person name="Loulseged H."/>
            <person name="Mungall K.L."/>
            <person name="Oliver K."/>
            <person name="Price C."/>
            <person name="Quail M.A."/>
            <person name="Urushihara H."/>
            <person name="Hernandez J."/>
            <person name="Rabbinowitsch E."/>
            <person name="Steffen D."/>
            <person name="Sanders M."/>
            <person name="Ma J."/>
            <person name="Kohara Y."/>
            <person name="Sharp S."/>
            <person name="Simmonds M.N."/>
            <person name="Spiegler S."/>
            <person name="Tivey A."/>
            <person name="Sugano S."/>
            <person name="White B."/>
            <person name="Walker D."/>
            <person name="Woodward J.R."/>
            <person name="Winckler T."/>
            <person name="Tanaka Y."/>
            <person name="Shaulsky G."/>
            <person name="Schleicher M."/>
            <person name="Weinstock G.M."/>
            <person name="Rosenthal A."/>
            <person name="Cox E.C."/>
            <person name="Chisholm R.L."/>
            <person name="Gibbs R.A."/>
            <person name="Loomis W.F."/>
            <person name="Platzer M."/>
            <person name="Kay R.R."/>
            <person name="Williams J.G."/>
            <person name="Dear P.H."/>
            <person name="Noegel A.A."/>
            <person name="Barrell B.G."/>
            <person name="Kuspa A."/>
        </authorList>
    </citation>
    <scope>NUCLEOTIDE SEQUENCE [LARGE SCALE GENOMIC DNA]</scope>
    <source>
        <strain>AX4</strain>
    </source>
</reference>
<sequence length="730" mass="79064">MTLNQIILSLILGLSLMTTIIKSVPMDPTIYIEGTIFDQWPEYNYNFEKTNPGSNVKTLGMVKAKLNSTTKVPELSSDDTKTSPNTLGTMQYPELFKYHFTSNVDAPASKNSGKNLPMKIQFKLDQDNSGFYTFFNQTFFPIDNMGYDVDPSFRIYKQSGNYHNFHFCVKMNSRFTYNGGEVFNFKGDDDLWVYIDDKLVVDVGGIHPAQDGSVNLDTLGLIKNKVYPLDLFYCERHTDGSTISIQTTIQAYCAWYDYCGVCGGTGAVCCNAKANCDDGDLCTIDSCPQPNLAFPDLQSVYKNCSHIPKDCPPANKCQVNSCDKTTGNCKPENLKCPDRSNECLKNTGCDDLTGCKYVSICTDSCDKKGNACVAGKCQQKTTSDCAAELDDNSCKVYSCNSTRGGCYSENKCKPDPTQICDVASCDDGACSIKTLPPDECNCGCKPNFCQKSNCVKNPSNNQFECSLLPADGIDDGNACTEDICDAVAQKITHVPYDTCKGCMSCNPSNGDCEAHNEVCNDFNACTENVCSPVKVGAGVGECVTTNTTCAPTTNVDKCKNYLCDSEKGCYETDVVCPDSGNCKVGHCDSKVGCSLKPRVCKSPAFCIVAECDETVGCIAFERRCASSNPKCKAGICVNGTTPEEGECESVNYDPKPFICQTGAIVSTAVIAGVTVAGAVALGIFIYGGKRGYDYWKESRSISMSSAVSSPMYVPSANASENPLYIPEGEL</sequence>
<feature type="signal peptide" evidence="1">
    <location>
        <begin position="1"/>
        <end position="23"/>
    </location>
</feature>
<feature type="chain" id="PRO_0000327548" description="Protein psiL">
    <location>
        <begin position="24"/>
        <end position="730"/>
    </location>
</feature>
<feature type="topological domain" description="Extracellular" evidence="1">
    <location>
        <begin position="24"/>
        <end position="667"/>
    </location>
</feature>
<feature type="transmembrane region" description="Helical" evidence="1">
    <location>
        <begin position="668"/>
        <end position="688"/>
    </location>
</feature>
<feature type="topological domain" description="Cytoplasmic" evidence="1">
    <location>
        <begin position="689"/>
        <end position="730"/>
    </location>
</feature>
<feature type="domain" description="PA14" evidence="2">
    <location>
        <begin position="125"/>
        <end position="265"/>
    </location>
</feature>
<feature type="glycosylation site" description="N-linked (GlcNAc...) asparagine" evidence="1">
    <location>
        <position position="67"/>
    </location>
</feature>
<feature type="glycosylation site" description="N-linked (GlcNAc...) asparagine" evidence="1">
    <location>
        <position position="136"/>
    </location>
</feature>
<feature type="glycosylation site" description="N-linked (GlcNAc...) asparagine" evidence="1">
    <location>
        <position position="303"/>
    </location>
</feature>
<feature type="glycosylation site" description="N-linked (GlcNAc...) asparagine" evidence="1">
    <location>
        <position position="400"/>
    </location>
</feature>
<feature type="glycosylation site" description="N-linked (GlcNAc...) asparagine" evidence="1">
    <location>
        <position position="546"/>
    </location>
</feature>
<feature type="glycosylation site" description="N-linked (GlcNAc...) asparagine" evidence="1">
    <location>
        <position position="638"/>
    </location>
</feature>